<feature type="signal peptide" evidence="2">
    <location>
        <begin position="1"/>
        <end position="20"/>
    </location>
</feature>
<feature type="chain" id="PRO_0000289285" description="Parvulin-like PPIase">
    <location>
        <begin position="21"/>
        <end position="282"/>
    </location>
</feature>
<feature type="domain" description="PpiC" evidence="3">
    <location>
        <begin position="138"/>
        <end position="231"/>
    </location>
</feature>
<dbReference type="EC" id="5.2.1.8"/>
<dbReference type="EMBL" id="AE006914">
    <property type="protein sequence ID" value="AAL03418.1"/>
    <property type="molecule type" value="Genomic_DNA"/>
</dbReference>
<dbReference type="PIR" id="H97809">
    <property type="entry name" value="H97809"/>
</dbReference>
<dbReference type="RefSeq" id="WP_010977485.1">
    <property type="nucleotide sequence ID" value="NC_003103.1"/>
</dbReference>
<dbReference type="SMR" id="Q92H91"/>
<dbReference type="GeneID" id="927849"/>
<dbReference type="KEGG" id="rco:RC0880"/>
<dbReference type="HOGENOM" id="CLU_034646_1_3_5"/>
<dbReference type="Proteomes" id="UP000000816">
    <property type="component" value="Chromosome"/>
</dbReference>
<dbReference type="GO" id="GO:0009279">
    <property type="term" value="C:cell outer membrane"/>
    <property type="evidence" value="ECO:0007669"/>
    <property type="project" value="UniProtKB-SubCell"/>
</dbReference>
<dbReference type="GO" id="GO:0003755">
    <property type="term" value="F:peptidyl-prolyl cis-trans isomerase activity"/>
    <property type="evidence" value="ECO:0007669"/>
    <property type="project" value="UniProtKB-KW"/>
</dbReference>
<dbReference type="Gene3D" id="3.10.50.40">
    <property type="match status" value="1"/>
</dbReference>
<dbReference type="InterPro" id="IPR046357">
    <property type="entry name" value="PPIase_dom_sf"/>
</dbReference>
<dbReference type="InterPro" id="IPR000297">
    <property type="entry name" value="PPIase_PpiC"/>
</dbReference>
<dbReference type="InterPro" id="IPR050245">
    <property type="entry name" value="PrsA_foldase"/>
</dbReference>
<dbReference type="PANTHER" id="PTHR47245:SF2">
    <property type="entry name" value="PEPTIDYL-PROLYL CIS-TRANS ISOMERASE HP_0175-RELATED"/>
    <property type="match status" value="1"/>
</dbReference>
<dbReference type="PANTHER" id="PTHR47245">
    <property type="entry name" value="PEPTIDYLPROLYL ISOMERASE"/>
    <property type="match status" value="1"/>
</dbReference>
<dbReference type="Pfam" id="PF13616">
    <property type="entry name" value="Rotamase_3"/>
    <property type="match status" value="1"/>
</dbReference>
<dbReference type="SUPFAM" id="SSF54534">
    <property type="entry name" value="FKBP-like"/>
    <property type="match status" value="1"/>
</dbReference>
<dbReference type="PROSITE" id="PS50198">
    <property type="entry name" value="PPIC_PPIASE_2"/>
    <property type="match status" value="1"/>
</dbReference>
<protein>
    <recommendedName>
        <fullName>Parvulin-like PPIase</fullName>
        <ecNumber>5.2.1.8</ecNumber>
    </recommendedName>
    <alternativeName>
        <fullName>Peptidyl-prolyl cis-trans isomerase plp</fullName>
    </alternativeName>
    <alternativeName>
        <fullName>Rotamase plp</fullName>
    </alternativeName>
</protein>
<gene>
    <name type="primary">plp</name>
    <name type="ordered locus">RC0880</name>
</gene>
<proteinExistence type="inferred from homology"/>
<keyword id="KW-0998">Cell outer membrane</keyword>
<keyword id="KW-0413">Isomerase</keyword>
<keyword id="KW-0472">Membrane</keyword>
<keyword id="KW-0697">Rotamase</keyword>
<keyword id="KW-0732">Signal</keyword>
<name>PLP_RICCN</name>
<evidence type="ECO:0000250" key="1"/>
<evidence type="ECO:0000255" key="2"/>
<evidence type="ECO:0000255" key="3">
    <source>
        <dbReference type="PROSITE-ProRule" id="PRU00278"/>
    </source>
</evidence>
<evidence type="ECO:0000305" key="4"/>
<sequence>MKKLSVIFLSVSMLSGIAFADKDKVVATYKGGEVKESQIMKEFKPQLNLQSGETIKNFDDFPPQDQEKLIKIYVNNLLLKEEVAKSNITSSKEFQEKLENAKNQLAQQELLANYIKSNITDKMFDDEYNKYVGNLKGKEQIKVAHILVKSQKEANDIKTKLSKGGNFTKLAEELSLDKASASNGGVIGYILLNQPGQLVPEFEKKAFALKVNEVSTPVKTDFGWHIIKVLEKKPVPIPTKEEAKVTIDNILAAEVLKKYIADLEAKANLKIMLPKADSKAGS</sequence>
<accession>Q92H91</accession>
<comment type="catalytic activity">
    <reaction>
        <text>[protein]-peptidylproline (omega=180) = [protein]-peptidylproline (omega=0)</text>
        <dbReference type="Rhea" id="RHEA:16237"/>
        <dbReference type="Rhea" id="RHEA-COMP:10747"/>
        <dbReference type="Rhea" id="RHEA-COMP:10748"/>
        <dbReference type="ChEBI" id="CHEBI:83833"/>
        <dbReference type="ChEBI" id="CHEBI:83834"/>
        <dbReference type="EC" id="5.2.1.8"/>
    </reaction>
</comment>
<comment type="subcellular location">
    <subcellularLocation>
        <location evidence="1">Cell outer membrane</location>
    </subcellularLocation>
</comment>
<comment type="similarity">
    <text evidence="4">Belongs to the PpiC/parvulin rotamase family.</text>
</comment>
<organism>
    <name type="scientific">Rickettsia conorii (strain ATCC VR-613 / Malish 7)</name>
    <dbReference type="NCBI Taxonomy" id="272944"/>
    <lineage>
        <taxon>Bacteria</taxon>
        <taxon>Pseudomonadati</taxon>
        <taxon>Pseudomonadota</taxon>
        <taxon>Alphaproteobacteria</taxon>
        <taxon>Rickettsiales</taxon>
        <taxon>Rickettsiaceae</taxon>
        <taxon>Rickettsieae</taxon>
        <taxon>Rickettsia</taxon>
        <taxon>spotted fever group</taxon>
    </lineage>
</organism>
<reference key="1">
    <citation type="journal article" date="2001" name="Science">
        <title>Mechanisms of evolution in Rickettsia conorii and R. prowazekii.</title>
        <authorList>
            <person name="Ogata H."/>
            <person name="Audic S."/>
            <person name="Renesto-Audiffren P."/>
            <person name="Fournier P.-E."/>
            <person name="Barbe V."/>
            <person name="Samson D."/>
            <person name="Roux V."/>
            <person name="Cossart P."/>
            <person name="Weissenbach J."/>
            <person name="Claverie J.-M."/>
            <person name="Raoult D."/>
        </authorList>
    </citation>
    <scope>NUCLEOTIDE SEQUENCE [LARGE SCALE GENOMIC DNA]</scope>
    <source>
        <strain>ATCC VR-613 / Malish 7</strain>
    </source>
</reference>